<comment type="function">
    <text>Transcription factor that acts both as a transcription.</text>
</comment>
<comment type="subcellular location">
    <subcellularLocation>
        <location evidence="1">Nucleus</location>
    </subcellularLocation>
</comment>
<comment type="tissue specificity">
    <text evidence="4">Testis-specific. Localizes to Sertoli cells.</text>
</comment>
<comment type="developmental stage">
    <text evidence="3 4">Not expressed in embryos. Expression starts around day 20.</text>
</comment>
<comment type="miscellaneous">
    <text>In contrast to dmrt1y/dmy paralog, which plays a key role in male sex determination, its role is unclear (PubMed:12037570, PubMed:12193652).</text>
</comment>
<comment type="similarity">
    <text evidence="5">Belongs to the DMRT family.</text>
</comment>
<dbReference type="EMBL" id="AF319991">
    <property type="protein sequence ID" value="AAL02162.1"/>
    <property type="molecule type" value="Genomic_DNA"/>
</dbReference>
<dbReference type="EMBL" id="AF319994">
    <property type="protein sequence ID" value="AAL02165.1"/>
    <property type="molecule type" value="mRNA"/>
</dbReference>
<dbReference type="EMBL" id="AY157712">
    <property type="protein sequence ID" value="AAO23674.1"/>
    <property type="molecule type" value="Genomic_DNA"/>
</dbReference>
<dbReference type="SMR" id="Q801F8"/>
<dbReference type="FunCoup" id="Q801F8">
    <property type="interactions" value="661"/>
</dbReference>
<dbReference type="STRING" id="8090.ENSORLP00000025381"/>
<dbReference type="Ensembl" id="ENSORLT00020020312.1">
    <property type="protein sequence ID" value="ENSORLP00020029782.1"/>
    <property type="gene ID" value="ENSORLG00020013974.1"/>
</dbReference>
<dbReference type="eggNOG" id="KOG3815">
    <property type="taxonomic scope" value="Eukaryota"/>
</dbReference>
<dbReference type="InParanoid" id="Q801F8"/>
<dbReference type="Proteomes" id="UP000001038">
    <property type="component" value="Unplaced"/>
</dbReference>
<dbReference type="Proteomes" id="UP000265180">
    <property type="component" value="Chromosome 9"/>
</dbReference>
<dbReference type="Proteomes" id="UP000265200">
    <property type="component" value="Unplaced"/>
</dbReference>
<dbReference type="GO" id="GO:0005634">
    <property type="term" value="C:nucleus"/>
    <property type="evidence" value="ECO:0000318"/>
    <property type="project" value="GO_Central"/>
</dbReference>
<dbReference type="GO" id="GO:0000981">
    <property type="term" value="F:DNA-binding transcription factor activity, RNA polymerase II-specific"/>
    <property type="evidence" value="ECO:0000318"/>
    <property type="project" value="GO_Central"/>
</dbReference>
<dbReference type="GO" id="GO:0046872">
    <property type="term" value="F:metal ion binding"/>
    <property type="evidence" value="ECO:0007669"/>
    <property type="project" value="UniProtKB-KW"/>
</dbReference>
<dbReference type="GO" id="GO:0000978">
    <property type="term" value="F:RNA polymerase II cis-regulatory region sequence-specific DNA binding"/>
    <property type="evidence" value="ECO:0000318"/>
    <property type="project" value="GO_Central"/>
</dbReference>
<dbReference type="GO" id="GO:0006357">
    <property type="term" value="P:regulation of transcription by RNA polymerase II"/>
    <property type="evidence" value="ECO:0000318"/>
    <property type="project" value="GO_Central"/>
</dbReference>
<dbReference type="GO" id="GO:0007548">
    <property type="term" value="P:sex differentiation"/>
    <property type="evidence" value="ECO:0000318"/>
    <property type="project" value="GO_Central"/>
</dbReference>
<dbReference type="FunFam" id="4.10.1040.10:FF:000001">
    <property type="entry name" value="doublesex- and mab-3-related transcription factor 1"/>
    <property type="match status" value="1"/>
</dbReference>
<dbReference type="Gene3D" id="4.10.1040.10">
    <property type="entry name" value="DM DNA-binding domain"/>
    <property type="match status" value="1"/>
</dbReference>
<dbReference type="InterPro" id="IPR001275">
    <property type="entry name" value="DM_DNA-bd"/>
</dbReference>
<dbReference type="InterPro" id="IPR036407">
    <property type="entry name" value="DM_DNA-bd_sf"/>
</dbReference>
<dbReference type="InterPro" id="IPR026607">
    <property type="entry name" value="DMRT"/>
</dbReference>
<dbReference type="InterPro" id="IPR022114">
    <property type="entry name" value="DMRT1-like"/>
</dbReference>
<dbReference type="PANTHER" id="PTHR12322">
    <property type="entry name" value="DOUBLESEX AND MAB-3 RELATED TRANSCRIPTION FACTOR DMRT"/>
    <property type="match status" value="1"/>
</dbReference>
<dbReference type="PANTHER" id="PTHR12322:SF70">
    <property type="entry name" value="DOUBLESEX- AND MAB-3-RELATED TRANSCRIPTION FACTOR 1"/>
    <property type="match status" value="1"/>
</dbReference>
<dbReference type="Pfam" id="PF00751">
    <property type="entry name" value="DM"/>
    <property type="match status" value="1"/>
</dbReference>
<dbReference type="Pfam" id="PF12374">
    <property type="entry name" value="Dmrt1"/>
    <property type="match status" value="1"/>
</dbReference>
<dbReference type="SMART" id="SM00301">
    <property type="entry name" value="DM"/>
    <property type="match status" value="1"/>
</dbReference>
<dbReference type="SUPFAM" id="SSF82927">
    <property type="entry name" value="Cysteine-rich DNA binding domain, (DM domain)"/>
    <property type="match status" value="1"/>
</dbReference>
<dbReference type="PROSITE" id="PS40000">
    <property type="entry name" value="DM_1"/>
    <property type="match status" value="1"/>
</dbReference>
<dbReference type="PROSITE" id="PS50809">
    <property type="entry name" value="DM_2"/>
    <property type="match status" value="1"/>
</dbReference>
<accession>Q801F8</accession>
<accession>Q90XZ5</accession>
<accession>Q90XZ8</accession>
<keyword id="KW-0010">Activator</keyword>
<keyword id="KW-0238">DNA-binding</keyword>
<keyword id="KW-0479">Metal-binding</keyword>
<keyword id="KW-0539">Nucleus</keyword>
<keyword id="KW-1185">Reference proteome</keyword>
<keyword id="KW-0678">Repressor</keyword>
<keyword id="KW-0804">Transcription</keyword>
<keyword id="KW-0805">Transcription regulation</keyword>
<keyword id="KW-0862">Zinc</keyword>
<evidence type="ECO:0000255" key="1">
    <source>
        <dbReference type="PROSITE-ProRule" id="PRU00070"/>
    </source>
</evidence>
<evidence type="ECO:0000256" key="2">
    <source>
        <dbReference type="SAM" id="MobiDB-lite"/>
    </source>
</evidence>
<evidence type="ECO:0000269" key="3">
    <source>
    </source>
</evidence>
<evidence type="ECO:0000269" key="4">
    <source>
    </source>
</evidence>
<evidence type="ECO:0000305" key="5"/>
<organism>
    <name type="scientific">Oryzias latipes</name>
    <name type="common">Japanese rice fish</name>
    <name type="synonym">Japanese killifish</name>
    <dbReference type="NCBI Taxonomy" id="8090"/>
    <lineage>
        <taxon>Eukaryota</taxon>
        <taxon>Metazoa</taxon>
        <taxon>Chordata</taxon>
        <taxon>Craniata</taxon>
        <taxon>Vertebrata</taxon>
        <taxon>Euteleostomi</taxon>
        <taxon>Actinopterygii</taxon>
        <taxon>Neopterygii</taxon>
        <taxon>Teleostei</taxon>
        <taxon>Neoteleostei</taxon>
        <taxon>Acanthomorphata</taxon>
        <taxon>Ovalentaria</taxon>
        <taxon>Atherinomorphae</taxon>
        <taxon>Beloniformes</taxon>
        <taxon>Adrianichthyidae</taxon>
        <taxon>Oryziinae</taxon>
        <taxon>Oryzias</taxon>
    </lineage>
</organism>
<gene>
    <name type="primary">dmrt1</name>
    <name type="synonym">dmrt1a</name>
</gene>
<name>DMRT1_ORYLA</name>
<reference key="1">
    <citation type="journal article" date="2001" name="Genomics">
        <title>Genomic organization and expression of the doublesex-related gene cluster in vertebrates and detection of putative regulatory regions for DMRT1.</title>
        <authorList>
            <person name="Brunner B."/>
            <person name="Hornung U."/>
            <person name="Shan Z."/>
            <person name="Nanda I."/>
            <person name="Kondo M."/>
            <person name="Zend-Ajusch E."/>
            <person name="Haaf T."/>
            <person name="Ropers H.-H."/>
            <person name="Shima A."/>
            <person name="Schmid M."/>
            <person name="Kalscheuer V.M."/>
            <person name="Schartl M."/>
        </authorList>
    </citation>
    <scope>NUCLEOTIDE SEQUENCE [MRNA]</scope>
    <source>
        <strain>Carolina Biological</strain>
    </source>
</reference>
<reference key="2">
    <citation type="journal article" date="2003" name="Curr. Biol.">
        <title>Absence of the candidate male sex-determining gene dmrt1b(Y) of medaka from other fish species.</title>
        <authorList>
            <person name="Kondo M."/>
            <person name="Nanda I."/>
            <person name="Hornung U."/>
            <person name="Asakawa S."/>
            <person name="Shimizu N."/>
            <person name="Mitani H."/>
            <person name="Schmid M."/>
            <person name="Shima A."/>
            <person name="Schartl M."/>
        </authorList>
    </citation>
    <scope>NUCLEOTIDE SEQUENCE [GENOMIC DNA]</scope>
    <source>
        <strain>HNI</strain>
    </source>
</reference>
<reference key="3">
    <citation type="journal article" date="2002" name="Nature">
        <title>DMY is a Y-specific DM-domain gene required for male development in the medaka fish.</title>
        <authorList>
            <person name="Matsuda M."/>
            <person name="Nagahama Y."/>
            <person name="Shinomiya A."/>
            <person name="Sato T."/>
            <person name="Matsuda C."/>
            <person name="Kobayashi T."/>
            <person name="Morrey C.E."/>
            <person name="Shibata N."/>
            <person name="Asakawa S."/>
            <person name="Shimizu N."/>
            <person name="Hori H."/>
            <person name="Hamaguchi S."/>
            <person name="Sakaizumi M."/>
        </authorList>
    </citation>
    <scope>DEVELOPMENTAL STAGE</scope>
    <source>
        <strain>HNI</strain>
    </source>
</reference>
<reference key="4">
    <citation type="journal article" date="2002" name="Proc. Natl. Acad. Sci. U.S.A.">
        <title>A duplicated copy of DMRT1 in the sex-determining region of the Y chromosome of the medaka, Oryzias latipes.</title>
        <authorList>
            <person name="Nanda I."/>
            <person name="Kondo M."/>
            <person name="Hornung U."/>
            <person name="Asakawa S."/>
            <person name="Winkler C."/>
            <person name="Shimizu A."/>
            <person name="Shan Z."/>
            <person name="Haaf T."/>
            <person name="Shimizu N."/>
            <person name="Shima A."/>
            <person name="Schmid M."/>
            <person name="Schartl M."/>
        </authorList>
    </citation>
    <scope>TISSUE SPECIFICITY</scope>
    <scope>DEVELOPMENTAL STAGE</scope>
    <source>
        <strain>HNI</strain>
    </source>
</reference>
<feature type="chain" id="PRO_0000416900" description="Doublesex- and mab-3-related transcription factor 1">
    <location>
        <begin position="1"/>
        <end position="280"/>
    </location>
</feature>
<feature type="DNA-binding region" description="DM" evidence="1">
    <location>
        <begin position="27"/>
        <end position="74"/>
    </location>
</feature>
<feature type="region of interest" description="Disordered" evidence="2">
    <location>
        <begin position="1"/>
        <end position="27"/>
    </location>
</feature>
<feature type="sequence conflict" description="In Ref. 1; AAL02162." evidence="5" ref="1">
    <original>G</original>
    <variation>A</variation>
    <location>
        <position position="17"/>
    </location>
</feature>
<feature type="sequence conflict" description="In Ref. 1; AAL02165." evidence="5" ref="1">
    <original>R</original>
    <variation>G</variation>
    <location>
        <position position="62"/>
    </location>
</feature>
<feature type="sequence conflict" description="In Ref. 1; AAL02162/AAL02165." evidence="5" ref="1">
    <original>M</original>
    <variation>T</variation>
    <location>
        <position position="96"/>
    </location>
</feature>
<feature type="sequence conflict" description="In Ref. 1; AAL02165." evidence="5" ref="1">
    <original>A</original>
    <variation>T</variation>
    <location>
        <position position="101"/>
    </location>
</feature>
<feature type="sequence conflict" description="In Ref. 1; AAL02162/AAL02165." evidence="5" ref="1">
    <original>A</original>
    <variation>G</variation>
    <location>
        <position position="117"/>
    </location>
</feature>
<feature type="sequence conflict" description="In Ref. 1; AAL02165." evidence="5" ref="1">
    <location>
        <position position="177"/>
    </location>
</feature>
<feature type="sequence conflict" description="In Ref. 1; AAL02165." evidence="5" ref="1">
    <original>T</original>
    <variation>S</variation>
    <location>
        <position position="279"/>
    </location>
</feature>
<protein>
    <recommendedName>
        <fullName>Doublesex- and mab-3-related transcription factor 1</fullName>
    </recommendedName>
</protein>
<proteinExistence type="evidence at transcript level"/>
<sequence length="280" mass="30294">MSKEKQGRPVPEGPAPGPQRSPRMPKCSRCRNHGFVSPLKGHKRFCRWKDCRCAKCKLIAERQRVMAAQVALRRQQAQEEELGICSPEASSGPEVMVKNEAGADCLFSMEGRSGTPAVPPNPLSAAGSCSASSSSPSAAARVYGEEASDLLLETSYYNFYQPSRYSSYYGNLYQQYQQMPPSDGRLSGHSMPSQYRMHSFYPGTAYLPQGLGSPVPPYFSLEDNDGAAASFSPSSLTSTHDSTLTCRSISSLVNVGVKAEFESGGQPSVFPADSMSSETK</sequence>